<keyword id="KW-0249">Electron transport</keyword>
<keyword id="KW-0256">Endoplasmic reticulum</keyword>
<keyword id="KW-0275">Fatty acid biosynthesis</keyword>
<keyword id="KW-0276">Fatty acid metabolism</keyword>
<keyword id="KW-0444">Lipid biosynthesis</keyword>
<keyword id="KW-0443">Lipid metabolism</keyword>
<keyword id="KW-0472">Membrane</keyword>
<keyword id="KW-0560">Oxidoreductase</keyword>
<keyword id="KW-1185">Reference proteome</keyword>
<keyword id="KW-0812">Transmembrane</keyword>
<keyword id="KW-1133">Transmembrane helix</keyword>
<keyword id="KW-0813">Transport</keyword>
<organism>
    <name type="scientific">Papio anubis</name>
    <name type="common">Olive baboon</name>
    <dbReference type="NCBI Taxonomy" id="9555"/>
    <lineage>
        <taxon>Eukaryota</taxon>
        <taxon>Metazoa</taxon>
        <taxon>Chordata</taxon>
        <taxon>Craniata</taxon>
        <taxon>Vertebrata</taxon>
        <taxon>Euteleostomi</taxon>
        <taxon>Mammalia</taxon>
        <taxon>Eutheria</taxon>
        <taxon>Euarchontoglires</taxon>
        <taxon>Primates</taxon>
        <taxon>Haplorrhini</taxon>
        <taxon>Catarrhini</taxon>
        <taxon>Cercopithecidae</taxon>
        <taxon>Cercopithecinae</taxon>
        <taxon>Papio</taxon>
    </lineage>
</organism>
<sequence length="444" mass="52301">MGKGGNQGEGAAEREVPMPTFSWEEIQKHNLRTDRWLVIDRKVYNITKWSTQHPGGQRVIGHYAGEDATDAFRAFHPDLKFVGKFLKPLLIGELAPEEPSQDHGKNSKIIEDFRALKKTAEDMNLFKTNHVFFLLLLAHIIALESIAWFTVFYFGNGWIPTLITAFVLATSQAQAGWLQHDYGHLSVYRKPKWNHLVHKFVIGHLKGASANWWNHRHFQHHAKPNIFHKDPDVNMLHVFVLGEWQPIEYGKKKLKYLPYNHQHEYFFLIGPPLLIPMYFQYQIIMTMIVHKNWVDLAWAISYYIRFFVTYIPFYGILGALLFLNFIRFLESHWFVWVTQMNHIVMEIDQEAYRDWFSSQLTATCNVEQSFFNDWFSGHLNFQIEHHLFPTMPRHNLHKIAPLVKSLCAKHGIEYQEKPLLRALLDIIRSLRKSGKLWLDAYLHK</sequence>
<evidence type="ECO:0000250" key="1">
    <source>
        <dbReference type="UniProtKB" id="O95864"/>
    </source>
</evidence>
<evidence type="ECO:0000250" key="2">
    <source>
        <dbReference type="UniProtKB" id="Q9Z122"/>
    </source>
</evidence>
<evidence type="ECO:0000255" key="3"/>
<evidence type="ECO:0000255" key="4">
    <source>
        <dbReference type="PROSITE-ProRule" id="PRU00279"/>
    </source>
</evidence>
<evidence type="ECO:0000269" key="5">
    <source>
    </source>
</evidence>
<evidence type="ECO:0000303" key="6">
    <source>
    </source>
</evidence>
<evidence type="ECO:0000305" key="7"/>
<evidence type="ECO:0000305" key="8">
    <source>
    </source>
</evidence>
<protein>
    <recommendedName>
        <fullName evidence="6">Acyl-CoA 6-desaturase</fullName>
        <ecNumber evidence="5">1.14.19.3</ecNumber>
    </recommendedName>
    <alternativeName>
        <fullName>Delta-6 fatty acid desaturase</fullName>
        <shortName>Delta(6) desaturase</shortName>
        <shortName evidence="1">Delta-6 desaturase</shortName>
    </alternativeName>
    <alternativeName>
        <fullName evidence="6">Fatty acid desaturase 2</fullName>
    </alternativeName>
</protein>
<accession>B8R1K0</accession>
<proteinExistence type="evidence at protein level"/>
<gene>
    <name evidence="6" type="primary">FADS2</name>
</gene>
<reference key="1">
    <citation type="journal article" date="2009" name="J. Lipid Res.">
        <title>An alternate pathway to long-chain polyunsaturates: the FADS2 gene product Delta8-desaturates 20:2n-6 and 20:3n-3.</title>
        <authorList>
            <person name="Park W.J."/>
            <person name="Kothapalli K.S."/>
            <person name="Lawrence P."/>
            <person name="Tyburczy C."/>
            <person name="Brenna J.T."/>
        </authorList>
    </citation>
    <scope>NUCLEOTIDE SEQUENCE [MRNA]</scope>
    <scope>FUNCTION</scope>
    <scope>CATALYTIC ACTIVITY</scope>
    <scope>PATHWAY</scope>
    <scope>DOMAIN</scope>
</reference>
<reference key="2">
    <citation type="submission" date="2012-03" db="EMBL/GenBank/DDBJ databases">
        <title>Whole Genome Assembly of Papio anubis.</title>
        <authorList>
            <person name="Liu Y.L."/>
            <person name="Abraham K.A."/>
            <person name="Akbar H.A."/>
            <person name="Ali S.A."/>
            <person name="Anosike U.A."/>
            <person name="Aqrawi P.A."/>
            <person name="Arias F.A."/>
            <person name="Attaway T.A."/>
            <person name="Awwad R.A."/>
            <person name="Babu C.B."/>
            <person name="Bandaranaike D.B."/>
            <person name="Battles P.B."/>
            <person name="Bell A.B."/>
            <person name="Beltran B.B."/>
            <person name="Berhane-Mersha D.B."/>
            <person name="Bess C.B."/>
            <person name="Bickham C.B."/>
            <person name="Bolden T.B."/>
            <person name="Carter K.C."/>
            <person name="Chau D.C."/>
            <person name="Chavez A.C."/>
            <person name="Clerc-Blankenburg K.C."/>
            <person name="Coyle M.C."/>
            <person name="Dao M.D."/>
            <person name="Davila M.L.D."/>
            <person name="Davy-Carroll L.D."/>
            <person name="Denson S.D."/>
            <person name="Dinh H.D."/>
            <person name="Fernandez S.F."/>
            <person name="Fernando P.F."/>
            <person name="Forbes L.F."/>
            <person name="Francis C.F."/>
            <person name="Francisco L.F."/>
            <person name="Fu Q.F."/>
            <person name="Garcia-Iii R.G."/>
            <person name="Garrett T.G."/>
            <person name="Gross S.G."/>
            <person name="Gubbala S.G."/>
            <person name="Hirani K.H."/>
            <person name="Hogues M.H."/>
            <person name="Hollins B.H."/>
            <person name="Jackson L.J."/>
            <person name="Javaid M.J."/>
            <person name="Jhangiani S.J."/>
            <person name="Johnson A.J."/>
            <person name="Johnson B.J."/>
            <person name="Jones J.J."/>
            <person name="Joshi V.J."/>
            <person name="Kalu J.K."/>
            <person name="Khan N.K."/>
            <person name="Korchina V.K."/>
            <person name="Kovar C.K."/>
            <person name="Lago L.L."/>
            <person name="Lara F.L."/>
            <person name="Le T.-K.L."/>
            <person name="Lee S.L."/>
            <person name="Legall-Iii F.L."/>
            <person name="Lemon S.L."/>
            <person name="Liu J.L."/>
            <person name="Liu Y.-S.L."/>
            <person name="Liyanage D.L."/>
            <person name="Lopez J.L."/>
            <person name="Lorensuhewa L.L."/>
            <person name="Mata R.M."/>
            <person name="Mathew T.M."/>
            <person name="Mercado C.M."/>
            <person name="Mercado I.M."/>
            <person name="Morales K.M."/>
            <person name="Morgan M.M."/>
            <person name="Munidasa M.M."/>
            <person name="Ngo D.N."/>
            <person name="Nguyen L.N."/>
            <person name="Nguyen T.N."/>
            <person name="Nguyen N.N."/>
            <person name="Obregon M.O."/>
            <person name="Okwuonu G.O."/>
            <person name="Ongeri F.O."/>
            <person name="Onwere C.O."/>
            <person name="Osifeso I.O."/>
            <person name="Parra A.P."/>
            <person name="Patil S.P."/>
            <person name="Perez A.P."/>
            <person name="Perez Y.P."/>
            <person name="Pham C.P."/>
            <person name="Pu L.-L.P."/>
            <person name="Puazo M.P."/>
            <person name="Quiroz J.Q."/>
            <person name="Rouhana J.R."/>
            <person name="Ruiz M.R."/>
            <person name="Ruiz S.-J.R."/>
            <person name="Saada N.S."/>
            <person name="Santibanez J.S."/>
            <person name="Scheel M.S."/>
            <person name="Schneider B.S."/>
            <person name="Simmons D.S."/>
            <person name="Sisson I.S."/>
            <person name="Tang L.-Y.T."/>
            <person name="Thornton R.T."/>
            <person name="Tisius J.T."/>
            <person name="Toledanes G.T."/>
            <person name="Trejos Z.T."/>
            <person name="Usmani K.U."/>
            <person name="Varghese R.V."/>
            <person name="Vattathil S.V."/>
            <person name="Vee V.V."/>
            <person name="Walker D.W."/>
            <person name="Weissenberger G.W."/>
            <person name="White C.W."/>
            <person name="Williams A.W."/>
            <person name="Woodworth J.W."/>
            <person name="Wright R.W."/>
            <person name="Zhu Y.Z."/>
            <person name="Han Y.H."/>
            <person name="Newsham I.N."/>
            <person name="Nazareth L.N."/>
            <person name="Worley K.W."/>
            <person name="Muzny D.M."/>
            <person name="Rogers J.R."/>
            <person name="Gibbs R.G."/>
        </authorList>
    </citation>
    <scope>NUCLEOTIDE SEQUENCE [LARGE SCALE GENOMIC DNA]</scope>
</reference>
<comment type="function">
    <text evidence="1 2 5">Involved in the biosynthesis of highly unsaturated fatty acids (HUFA) from the essential polyunsaturated fatty acids (PUFA) linoleic acid (LA) (18:2n-6) and alpha-linolenic acid (ALA) (18:3n-3) precursors, acting as a fatty acyl-coenzyme A (CoA) desaturase that introduces a cis double bond at carbon 6 of the fatty acyl chain. Catalyzes the first and rate limiting step in this pathway which is the desaturation of LA (18:2n-6) and ALA (18:3n-3) into gamma-linoleate (GLA) (18:3n-6) and stearidonate (18:4n-3), respectively (By similarity). Subsequently, in the biosynthetic pathway of HUFA n-3 series, it desaturates tetracosapentaenoate (24:5n-3) to tetracosahexaenoate (24:6n-3), which is then converted to docosahexaenoate (DHA)(22:6n-3), an important lipid for nervous system function (By similarity). It can also desaturate (11E)-octadecenoate (trans-vaccenoate) at carbon 6 generating (6Z,11E)-octadecadienoate (By similarity). In addition to Delta-6 activity, this enzyme exhibits Delta-8 activity with slight biases toward n-3 fatty acyl-CoA substrates (PubMed:19202133).</text>
</comment>
<comment type="catalytic activity">
    <reaction evidence="5">
        <text>(9Z,12Z)-octadecadienoyl-CoA + 2 Fe(II)-[cytochrome b5] + O2 + 2 H(+) = (6Z,9Z,12Z)-octadecatrienoyl-CoA + 2 Fe(III)-[cytochrome b5] + 2 H2O</text>
        <dbReference type="Rhea" id="RHEA:47140"/>
        <dbReference type="Rhea" id="RHEA-COMP:10438"/>
        <dbReference type="Rhea" id="RHEA-COMP:10439"/>
        <dbReference type="ChEBI" id="CHEBI:15377"/>
        <dbReference type="ChEBI" id="CHEBI:15378"/>
        <dbReference type="ChEBI" id="CHEBI:15379"/>
        <dbReference type="ChEBI" id="CHEBI:29033"/>
        <dbReference type="ChEBI" id="CHEBI:29034"/>
        <dbReference type="ChEBI" id="CHEBI:57363"/>
        <dbReference type="ChEBI" id="CHEBI:57383"/>
        <dbReference type="EC" id="1.14.19.3"/>
    </reaction>
    <physiologicalReaction direction="left-to-right" evidence="5">
        <dbReference type="Rhea" id="RHEA:47141"/>
    </physiologicalReaction>
</comment>
<comment type="catalytic activity">
    <reaction evidence="5">
        <text>(9Z,12Z,15Z)-octadecatrienoyl-CoA + 2 Fe(II)-[cytochrome b5] + O2 + 2 H(+) = (6Z,9Z,12Z,15Z)-octadecatetraenoyl-CoA + 2 Fe(III)-[cytochrome b5] + 2 H2O</text>
        <dbReference type="Rhea" id="RHEA:47144"/>
        <dbReference type="Rhea" id="RHEA-COMP:10438"/>
        <dbReference type="Rhea" id="RHEA-COMP:10439"/>
        <dbReference type="ChEBI" id="CHEBI:15377"/>
        <dbReference type="ChEBI" id="CHEBI:15378"/>
        <dbReference type="ChEBI" id="CHEBI:15379"/>
        <dbReference type="ChEBI" id="CHEBI:29033"/>
        <dbReference type="ChEBI" id="CHEBI:29034"/>
        <dbReference type="ChEBI" id="CHEBI:71489"/>
        <dbReference type="ChEBI" id="CHEBI:74034"/>
        <dbReference type="EC" id="1.14.19.3"/>
    </reaction>
    <physiologicalReaction direction="left-to-right" evidence="5">
        <dbReference type="Rhea" id="RHEA:47145"/>
    </physiologicalReaction>
</comment>
<comment type="catalytic activity">
    <reaction evidence="2">
        <text>(9Z,12Z,15Z,18Z,21Z)-tetracosapentaenoyl-CoA + 2 Fe(II)-[cytochrome b5] + O2 + 2 H(+) = (6Z,9Z,12Z,15Z,18Z,21Z)-tetracosahexaenoyl-CoA + 2 Fe(III)-[cytochrome b5] + 2 H2O</text>
        <dbReference type="Rhea" id="RHEA:36999"/>
        <dbReference type="Rhea" id="RHEA-COMP:10438"/>
        <dbReference type="Rhea" id="RHEA-COMP:10439"/>
        <dbReference type="ChEBI" id="CHEBI:15377"/>
        <dbReference type="ChEBI" id="CHEBI:15378"/>
        <dbReference type="ChEBI" id="CHEBI:15379"/>
        <dbReference type="ChEBI" id="CHEBI:29033"/>
        <dbReference type="ChEBI" id="CHEBI:29034"/>
        <dbReference type="ChEBI" id="CHEBI:74083"/>
        <dbReference type="ChEBI" id="CHEBI:74086"/>
    </reaction>
    <physiologicalReaction direction="left-to-right" evidence="2">
        <dbReference type="Rhea" id="RHEA:37000"/>
    </physiologicalReaction>
</comment>
<comment type="catalytic activity">
    <reaction evidence="2">
        <text>(11E)-octadecenoyl-CoA + 2 Fe(II)-[cytochrome b5] + O2 + 2 H(+) = (6Z,11E)-octadecadienoyl-CoA + 2 Fe(III)-[cytochrome b5] + 2 H2O</text>
        <dbReference type="Rhea" id="RHEA:46064"/>
        <dbReference type="Rhea" id="RHEA-COMP:10438"/>
        <dbReference type="Rhea" id="RHEA-COMP:10439"/>
        <dbReference type="ChEBI" id="CHEBI:15377"/>
        <dbReference type="ChEBI" id="CHEBI:15378"/>
        <dbReference type="ChEBI" id="CHEBI:15379"/>
        <dbReference type="ChEBI" id="CHEBI:29033"/>
        <dbReference type="ChEBI" id="CHEBI:29034"/>
        <dbReference type="ChEBI" id="CHEBI:74296"/>
        <dbReference type="ChEBI" id="CHEBI:85652"/>
    </reaction>
    <physiologicalReaction direction="left-to-right" evidence="2">
        <dbReference type="Rhea" id="RHEA:46065"/>
    </physiologicalReaction>
</comment>
<comment type="catalytic activity">
    <reaction evidence="5">
        <text>(11Z,14Z)-eicosadienoyl-CoA + 2 Fe(II)-[cytochrome b5] + O2 + 2 H(+) = (8Z,11Z,14Z)-eicosatrienoyl-CoA + 2 Fe(III)-[cytochrome b5] + 2 H2O</text>
        <dbReference type="Rhea" id="RHEA:39567"/>
        <dbReference type="Rhea" id="RHEA-COMP:10438"/>
        <dbReference type="Rhea" id="RHEA-COMP:10439"/>
        <dbReference type="ChEBI" id="CHEBI:15377"/>
        <dbReference type="ChEBI" id="CHEBI:15378"/>
        <dbReference type="ChEBI" id="CHEBI:15379"/>
        <dbReference type="ChEBI" id="CHEBI:29033"/>
        <dbReference type="ChEBI" id="CHEBI:29034"/>
        <dbReference type="ChEBI" id="CHEBI:74264"/>
        <dbReference type="ChEBI" id="CHEBI:76410"/>
    </reaction>
    <physiologicalReaction direction="left-to-right" evidence="5">
        <dbReference type="Rhea" id="RHEA:39568"/>
    </physiologicalReaction>
</comment>
<comment type="catalytic activity">
    <reaction evidence="5">
        <text>(11Z,14Z,17Z)-eicosatrienoyl-CoA + 2 Fe(II)-[cytochrome b5] + O2 + 2 H(+) = (8Z,11Z,14Z,17Z)-eicosatetraenoyl-CoA + 2 Fe(III)-[cytochrome b5] + 2 H2O</text>
        <dbReference type="Rhea" id="RHEA:39571"/>
        <dbReference type="Rhea" id="RHEA-COMP:10438"/>
        <dbReference type="Rhea" id="RHEA-COMP:10439"/>
        <dbReference type="ChEBI" id="CHEBI:15377"/>
        <dbReference type="ChEBI" id="CHEBI:15378"/>
        <dbReference type="ChEBI" id="CHEBI:15379"/>
        <dbReference type="ChEBI" id="CHEBI:29033"/>
        <dbReference type="ChEBI" id="CHEBI:29034"/>
        <dbReference type="ChEBI" id="CHEBI:74265"/>
        <dbReference type="ChEBI" id="CHEBI:74328"/>
    </reaction>
    <physiologicalReaction direction="left-to-right" evidence="5">
        <dbReference type="Rhea" id="RHEA:39572"/>
    </physiologicalReaction>
</comment>
<comment type="pathway">
    <text evidence="8">Lipid metabolism; polyunsaturated fatty acid biosynthesis.</text>
</comment>
<comment type="subcellular location">
    <subcellularLocation>
        <location evidence="7">Endoplasmic reticulum membrane</location>
        <topology evidence="3">Multi-pass membrane protein</topology>
    </subcellularLocation>
</comment>
<comment type="domain">
    <text evidence="6">The protein sequence includes a number of characteristic features of microsomal fatty acid desaturases including the three histidine boxes HXXXH, HXXHH, and QXXHH (these domains may contain the active site and/or be involved in metal ion binding), and the N-terminal cytochrome b5 domain containing the heme-binding motif, HPGG, similar to that of other fatty acid desaturases.</text>
</comment>
<comment type="similarity">
    <text evidence="7">Belongs to the fatty acid desaturase type 1 family.</text>
</comment>
<feature type="chain" id="PRO_0000451726" description="Acyl-CoA 6-desaturase">
    <location>
        <begin position="1"/>
        <end position="444"/>
    </location>
</feature>
<feature type="topological domain" description="Cytoplasmic" evidence="7">
    <location>
        <begin position="1"/>
        <end position="131"/>
    </location>
</feature>
<feature type="transmembrane region" description="Helical" evidence="3">
    <location>
        <begin position="132"/>
        <end position="152"/>
    </location>
</feature>
<feature type="topological domain" description="Lumenal" evidence="7">
    <location>
        <begin position="153"/>
        <end position="157"/>
    </location>
</feature>
<feature type="transmembrane region" description="Helical" evidence="3">
    <location>
        <begin position="158"/>
        <end position="178"/>
    </location>
</feature>
<feature type="topological domain" description="Cytoplasmic" evidence="7">
    <location>
        <begin position="179"/>
        <end position="264"/>
    </location>
</feature>
<feature type="transmembrane region" description="Helical" evidence="3">
    <location>
        <begin position="265"/>
        <end position="285"/>
    </location>
</feature>
<feature type="topological domain" description="Lumenal" evidence="7">
    <location>
        <begin position="286"/>
        <end position="305"/>
    </location>
</feature>
<feature type="transmembrane region" description="Helical" evidence="3">
    <location>
        <begin position="306"/>
        <end position="326"/>
    </location>
</feature>
<feature type="topological domain" description="Cytoplasmic" evidence="7">
    <location>
        <begin position="327"/>
        <end position="444"/>
    </location>
</feature>
<feature type="domain" description="Cytochrome b5 heme-binding" evidence="4">
    <location>
        <begin position="18"/>
        <end position="95"/>
    </location>
</feature>
<feature type="short sequence motif" description="Histidine box-1" evidence="6">
    <location>
        <begin position="180"/>
        <end position="184"/>
    </location>
</feature>
<feature type="short sequence motif" description="Histidine box-2" evidence="6">
    <location>
        <begin position="217"/>
        <end position="221"/>
    </location>
</feature>
<feature type="short sequence motif" description="Histidine box-3" evidence="6">
    <location>
        <begin position="382"/>
        <end position="386"/>
    </location>
</feature>
<name>FADS2_PAPAN</name>
<dbReference type="EC" id="1.14.19.3" evidence="5"/>
<dbReference type="EMBL" id="AHZZ02006386">
    <property type="status" value="NOT_ANNOTATED_CDS"/>
    <property type="molecule type" value="Genomic_DNA"/>
</dbReference>
<dbReference type="EMBL" id="EU780003">
    <property type="protein sequence ID" value="ACI46980.1"/>
    <property type="molecule type" value="mRNA"/>
</dbReference>
<dbReference type="RefSeq" id="NP_001138559.1">
    <property type="nucleotide sequence ID" value="NM_001145087.1"/>
</dbReference>
<dbReference type="SMR" id="B8R1K0"/>
<dbReference type="STRING" id="9555.ENSPANP00000023963"/>
<dbReference type="SwissLipids" id="SLP:000000444"/>
<dbReference type="Ensembl" id="ENSPANT00000027105.3">
    <property type="protein sequence ID" value="ENSPANP00000007895.3"/>
    <property type="gene ID" value="ENSPANG00000015652.4"/>
</dbReference>
<dbReference type="GeneID" id="100126749"/>
<dbReference type="KEGG" id="panu:100126749"/>
<dbReference type="CTD" id="9415"/>
<dbReference type="GeneTree" id="ENSGT00950000182990"/>
<dbReference type="OMA" id="QWWKNKH"/>
<dbReference type="OrthoDB" id="3257at314294"/>
<dbReference type="BRENDA" id="1.14.19.3">
    <property type="organism ID" value="4519"/>
</dbReference>
<dbReference type="BRENDA" id="1.14.19.31">
    <property type="organism ID" value="4519"/>
</dbReference>
<dbReference type="BRENDA" id="1.14.19.4">
    <property type="organism ID" value="4519"/>
</dbReference>
<dbReference type="UniPathway" id="UPA00658"/>
<dbReference type="Proteomes" id="UP000028761">
    <property type="component" value="Chromosome 12"/>
</dbReference>
<dbReference type="Bgee" id="ENSPANG00000015652">
    <property type="expression patterns" value="Expressed in pigmented layer of retina and 65 other cell types or tissues"/>
</dbReference>
<dbReference type="ExpressionAtlas" id="B8R1K0">
    <property type="expression patterns" value="baseline"/>
</dbReference>
<dbReference type="GO" id="GO:0005789">
    <property type="term" value="C:endoplasmic reticulum membrane"/>
    <property type="evidence" value="ECO:0007669"/>
    <property type="project" value="UniProtKB-SubCell"/>
</dbReference>
<dbReference type="GO" id="GO:0016213">
    <property type="term" value="F:acyl-CoA 6-desaturase activity"/>
    <property type="evidence" value="ECO:0007669"/>
    <property type="project" value="UniProtKB-EC"/>
</dbReference>
<dbReference type="GO" id="GO:0004768">
    <property type="term" value="F:stearoyl-CoA 9-desaturase activity"/>
    <property type="evidence" value="ECO:0007669"/>
    <property type="project" value="Ensembl"/>
</dbReference>
<dbReference type="GO" id="GO:0036109">
    <property type="term" value="P:alpha-linolenic acid metabolic process"/>
    <property type="evidence" value="ECO:0007669"/>
    <property type="project" value="Ensembl"/>
</dbReference>
<dbReference type="GO" id="GO:1901570">
    <property type="term" value="P:fatty acid derivative biosynthetic process"/>
    <property type="evidence" value="ECO:0007669"/>
    <property type="project" value="Ensembl"/>
</dbReference>
<dbReference type="GO" id="GO:0043651">
    <property type="term" value="P:linoleic acid metabolic process"/>
    <property type="evidence" value="ECO:0007669"/>
    <property type="project" value="Ensembl"/>
</dbReference>
<dbReference type="GO" id="GO:0042759">
    <property type="term" value="P:long-chain fatty acid biosynthetic process"/>
    <property type="evidence" value="ECO:0007669"/>
    <property type="project" value="Ensembl"/>
</dbReference>
<dbReference type="GO" id="GO:0006636">
    <property type="term" value="P:unsaturated fatty acid biosynthetic process"/>
    <property type="evidence" value="ECO:0007669"/>
    <property type="project" value="UniProtKB-UniPathway"/>
</dbReference>
<dbReference type="CDD" id="cd03506">
    <property type="entry name" value="Delta6-FADS-like"/>
    <property type="match status" value="1"/>
</dbReference>
<dbReference type="FunFam" id="3.10.120.10:FF:000010">
    <property type="entry name" value="Delta-6 fatty acyl desaturase"/>
    <property type="match status" value="1"/>
</dbReference>
<dbReference type="Gene3D" id="3.10.120.10">
    <property type="entry name" value="Cytochrome b5-like heme/steroid binding domain"/>
    <property type="match status" value="1"/>
</dbReference>
<dbReference type="InterPro" id="IPR001199">
    <property type="entry name" value="Cyt_B5-like_heme/steroid-bd"/>
</dbReference>
<dbReference type="InterPro" id="IPR036400">
    <property type="entry name" value="Cyt_B5-like_heme/steroid_sf"/>
</dbReference>
<dbReference type="InterPro" id="IPR005804">
    <property type="entry name" value="FA_desaturase_dom"/>
</dbReference>
<dbReference type="InterPro" id="IPR012171">
    <property type="entry name" value="Fatty_acid_desaturase"/>
</dbReference>
<dbReference type="PANTHER" id="PTHR19353:SF12">
    <property type="entry name" value="ACYL-COA 6-DESATURASE"/>
    <property type="match status" value="1"/>
</dbReference>
<dbReference type="PANTHER" id="PTHR19353">
    <property type="entry name" value="FATTY ACID DESATURASE 2"/>
    <property type="match status" value="1"/>
</dbReference>
<dbReference type="Pfam" id="PF00173">
    <property type="entry name" value="Cyt-b5"/>
    <property type="match status" value="1"/>
</dbReference>
<dbReference type="Pfam" id="PF00487">
    <property type="entry name" value="FA_desaturase"/>
    <property type="match status" value="1"/>
</dbReference>
<dbReference type="PIRSF" id="PIRSF015921">
    <property type="entry name" value="FA_sphinglp_des"/>
    <property type="match status" value="1"/>
</dbReference>
<dbReference type="PRINTS" id="PR00363">
    <property type="entry name" value="CYTOCHROMEB5"/>
</dbReference>
<dbReference type="SMART" id="SM01117">
    <property type="entry name" value="Cyt-b5"/>
    <property type="match status" value="1"/>
</dbReference>
<dbReference type="SUPFAM" id="SSF55856">
    <property type="entry name" value="Cytochrome b5-like heme/steroid binding domain"/>
    <property type="match status" value="1"/>
</dbReference>
<dbReference type="PROSITE" id="PS50255">
    <property type="entry name" value="CYTOCHROME_B5_2"/>
    <property type="match status" value="1"/>
</dbReference>